<sequence>MDIKQTAVAGSLESSDLMITVSPNDEKTITITLDSSVEKQFGNHIRQLIHQTLVNLKVTAAKVEAVDKGALDCTIQARTIAAVHRAAGVDQYDWKEIDSWNV</sequence>
<name>CITD_STRPF</name>
<feature type="chain" id="PRO_1000047083" description="Citrate lyase acyl carrier protein">
    <location>
        <begin position="1"/>
        <end position="102"/>
    </location>
</feature>
<feature type="modified residue" description="O-(phosphoribosyl dephospho-coenzyme A)serine" evidence="1">
    <location>
        <position position="14"/>
    </location>
</feature>
<evidence type="ECO:0000255" key="1">
    <source>
        <dbReference type="HAMAP-Rule" id="MF_00805"/>
    </source>
</evidence>
<protein>
    <recommendedName>
        <fullName evidence="1">Citrate lyase acyl carrier protein</fullName>
    </recommendedName>
    <alternativeName>
        <fullName evidence="1">Citrate lyase gamma chain</fullName>
    </alternativeName>
</protein>
<reference key="1">
    <citation type="journal article" date="2006" name="Proc. Natl. Acad. Sci. U.S.A.">
        <title>Molecular genetic anatomy of inter- and intraserotype variation in the human bacterial pathogen group A Streptococcus.</title>
        <authorList>
            <person name="Beres S.B."/>
            <person name="Richter E.W."/>
            <person name="Nagiec M.J."/>
            <person name="Sumby P."/>
            <person name="Porcella S.F."/>
            <person name="DeLeo F.R."/>
            <person name="Musser J.M."/>
        </authorList>
    </citation>
    <scope>NUCLEOTIDE SEQUENCE [LARGE SCALE GENOMIC DNA]</scope>
    <source>
        <strain>MGAS10750</strain>
    </source>
</reference>
<comment type="function">
    <text evidence="1">Covalent carrier of the coenzyme of citrate lyase.</text>
</comment>
<comment type="subunit">
    <text evidence="1">Oligomer with a subunit composition of (alpha,beta,gamma)6.</text>
</comment>
<comment type="subcellular location">
    <subcellularLocation>
        <location evidence="1">Cytoplasm</location>
    </subcellularLocation>
</comment>
<comment type="similarity">
    <text evidence="1">Belongs to the CitD family.</text>
</comment>
<proteinExistence type="inferred from homology"/>
<dbReference type="EMBL" id="CP000262">
    <property type="protein sequence ID" value="ABF38005.1"/>
    <property type="molecule type" value="Genomic_DNA"/>
</dbReference>
<dbReference type="SMR" id="Q1J6H8"/>
<dbReference type="KEGG" id="spi:MGAS10750_Spy1055"/>
<dbReference type="HOGENOM" id="CLU_158489_0_0_9"/>
<dbReference type="Proteomes" id="UP000002434">
    <property type="component" value="Chromosome"/>
</dbReference>
<dbReference type="GO" id="GO:0005737">
    <property type="term" value="C:cytoplasm"/>
    <property type="evidence" value="ECO:0007669"/>
    <property type="project" value="UniProtKB-SubCell"/>
</dbReference>
<dbReference type="HAMAP" id="MF_00805">
    <property type="entry name" value="CitD"/>
    <property type="match status" value="1"/>
</dbReference>
<dbReference type="InterPro" id="IPR006495">
    <property type="entry name" value="CitD"/>
</dbReference>
<dbReference type="InterPro" id="IPR023439">
    <property type="entry name" value="Mal_deCO2ase/Cit_lyase_ACP"/>
</dbReference>
<dbReference type="NCBIfam" id="TIGR01608">
    <property type="entry name" value="citD"/>
    <property type="match status" value="1"/>
</dbReference>
<dbReference type="NCBIfam" id="NF009726">
    <property type="entry name" value="PRK13253.1"/>
    <property type="match status" value="1"/>
</dbReference>
<dbReference type="Pfam" id="PF06857">
    <property type="entry name" value="ACP"/>
    <property type="match status" value="1"/>
</dbReference>
<dbReference type="PIRSF" id="PIRSF002736">
    <property type="entry name" value="Citrt_lyas_gamma"/>
    <property type="match status" value="1"/>
</dbReference>
<keyword id="KW-0963">Cytoplasm</keyword>
<keyword id="KW-0597">Phosphoprotein</keyword>
<gene>
    <name evidence="1" type="primary">citD</name>
    <name type="ordered locus">MGAS10750_Spy1055</name>
</gene>
<organism>
    <name type="scientific">Streptococcus pyogenes serotype M4 (strain MGAS10750)</name>
    <dbReference type="NCBI Taxonomy" id="370554"/>
    <lineage>
        <taxon>Bacteria</taxon>
        <taxon>Bacillati</taxon>
        <taxon>Bacillota</taxon>
        <taxon>Bacilli</taxon>
        <taxon>Lactobacillales</taxon>
        <taxon>Streptococcaceae</taxon>
        <taxon>Streptococcus</taxon>
    </lineage>
</organism>
<accession>Q1J6H8</accession>